<feature type="initiator methionine" description="Removed">
    <location>
        <position position="1"/>
    </location>
</feature>
<feature type="chain" id="PRO_0000153060" description="Nitrogenase vanadium-iron protein alpha chain">
    <location>
        <begin position="2"/>
        <end position="474"/>
    </location>
</feature>
<feature type="binding site" evidence="1">
    <location>
        <position position="49"/>
    </location>
    <ligand>
        <name>[8Fe-7S] cluster</name>
        <dbReference type="ChEBI" id="CHEBI:21143"/>
        <note>ligand shared with beta chain</note>
    </ligand>
</feature>
<feature type="binding site" evidence="1">
    <location>
        <position position="75"/>
    </location>
    <ligand>
        <name>[8Fe-7S] cluster</name>
        <dbReference type="ChEBI" id="CHEBI:21143"/>
        <note>ligand shared with beta chain</note>
    </ligand>
</feature>
<feature type="binding site" evidence="1">
    <location>
        <position position="138"/>
    </location>
    <ligand>
        <name>[8Fe-7S] cluster</name>
        <dbReference type="ChEBI" id="CHEBI:21143"/>
        <note>ligand shared with beta chain</note>
    </ligand>
</feature>
<feature type="binding site" evidence="1">
    <location>
        <position position="257"/>
    </location>
    <ligand>
        <name>[7Fe-V-9S-C-homocitryl] cluster</name>
        <dbReference type="ChEBI" id="CHEBI:60357"/>
    </ligand>
</feature>
<feature type="binding site" evidence="1">
    <location>
        <position position="423"/>
    </location>
    <ligand>
        <name>[7Fe-V-9S-C-homocitryl] cluster</name>
        <dbReference type="ChEBI" id="CHEBI:60357"/>
    </ligand>
</feature>
<feature type="helix" evidence="3">
    <location>
        <begin position="7"/>
        <end position="9"/>
    </location>
</feature>
<feature type="helix" evidence="3">
    <location>
        <begin position="13"/>
        <end position="18"/>
    </location>
</feature>
<feature type="strand" evidence="3">
    <location>
        <begin position="19"/>
        <end position="21"/>
    </location>
</feature>
<feature type="helix" evidence="3">
    <location>
        <begin position="28"/>
        <end position="30"/>
    </location>
</feature>
<feature type="helix" evidence="3">
    <location>
        <begin position="50"/>
        <end position="55"/>
    </location>
</feature>
<feature type="turn" evidence="3">
    <location>
        <begin position="56"/>
        <end position="58"/>
    </location>
</feature>
<feature type="helix" evidence="3">
    <location>
        <begin position="59"/>
        <end position="61"/>
    </location>
</feature>
<feature type="strand" evidence="3">
    <location>
        <begin position="66"/>
        <end position="71"/>
    </location>
</feature>
<feature type="helix" evidence="3">
    <location>
        <begin position="73"/>
        <end position="77"/>
    </location>
</feature>
<feature type="strand" evidence="3">
    <location>
        <begin position="88"/>
        <end position="90"/>
    </location>
</feature>
<feature type="helix" evidence="3">
    <location>
        <begin position="92"/>
        <end position="95"/>
    </location>
</feature>
<feature type="helix" evidence="3">
    <location>
        <begin position="104"/>
        <end position="109"/>
    </location>
</feature>
<feature type="helix" evidence="3">
    <location>
        <begin position="112"/>
        <end position="125"/>
    </location>
</feature>
<feature type="strand" evidence="3">
    <location>
        <begin position="131"/>
        <end position="136"/>
    </location>
</feature>
<feature type="helix" evidence="3">
    <location>
        <begin position="138"/>
        <end position="142"/>
    </location>
</feature>
<feature type="helix" evidence="3">
    <location>
        <begin position="147"/>
        <end position="157"/>
    </location>
</feature>
<feature type="strand" evidence="3">
    <location>
        <begin position="162"/>
        <end position="166"/>
    </location>
</feature>
<feature type="strand" evidence="3">
    <location>
        <begin position="172"/>
        <end position="175"/>
    </location>
</feature>
<feature type="helix" evidence="3">
    <location>
        <begin position="177"/>
        <end position="190"/>
    </location>
</feature>
<feature type="turn" evidence="3">
    <location>
        <begin position="191"/>
        <end position="193"/>
    </location>
</feature>
<feature type="strand" evidence="3">
    <location>
        <begin position="204"/>
        <end position="210"/>
    </location>
</feature>
<feature type="helix" evidence="3">
    <location>
        <begin position="213"/>
        <end position="215"/>
    </location>
</feature>
<feature type="helix" evidence="3">
    <location>
        <begin position="216"/>
        <end position="227"/>
    </location>
</feature>
<feature type="strand" evidence="3">
    <location>
        <begin position="230"/>
        <end position="236"/>
    </location>
</feature>
<feature type="helix" evidence="3">
    <location>
        <begin position="241"/>
        <end position="244"/>
    </location>
</feature>
<feature type="helix" evidence="3">
    <location>
        <begin position="245"/>
        <end position="249"/>
    </location>
</feature>
<feature type="strand" evidence="3">
    <location>
        <begin position="251"/>
        <end position="256"/>
    </location>
</feature>
<feature type="helix" evidence="3">
    <location>
        <begin position="258"/>
        <end position="272"/>
    </location>
</feature>
<feature type="strand" evidence="3">
    <location>
        <begin position="276"/>
        <end position="278"/>
    </location>
</feature>
<feature type="strand" evidence="4">
    <location>
        <begin position="281"/>
        <end position="283"/>
    </location>
</feature>
<feature type="helix" evidence="3">
    <location>
        <begin position="284"/>
        <end position="298"/>
    </location>
</feature>
<feature type="helix" evidence="3">
    <location>
        <begin position="301"/>
        <end position="326"/>
    </location>
</feature>
<feature type="strand" evidence="3">
    <location>
        <begin position="330"/>
        <end position="337"/>
    </location>
</feature>
<feature type="helix" evidence="3">
    <location>
        <begin position="338"/>
        <end position="351"/>
    </location>
</feature>
<feature type="strand" evidence="3">
    <location>
        <begin position="354"/>
        <end position="362"/>
    </location>
</feature>
<feature type="helix" evidence="3">
    <location>
        <begin position="365"/>
        <end position="374"/>
    </location>
</feature>
<feature type="strand" evidence="3">
    <location>
        <begin position="380"/>
        <end position="384"/>
    </location>
</feature>
<feature type="helix" evidence="3">
    <location>
        <begin position="387"/>
        <end position="397"/>
    </location>
</feature>
<feature type="strand" evidence="3">
    <location>
        <begin position="400"/>
        <end position="404"/>
    </location>
</feature>
<feature type="helix" evidence="3">
    <location>
        <begin position="406"/>
        <end position="412"/>
    </location>
</feature>
<feature type="helix" evidence="3">
    <location>
        <begin position="413"/>
        <end position="415"/>
    </location>
</feature>
<feature type="strand" evidence="3">
    <location>
        <begin position="419"/>
        <end position="421"/>
    </location>
</feature>
<feature type="turn" evidence="3">
    <location>
        <begin position="422"/>
        <end position="424"/>
    </location>
</feature>
<feature type="helix" evidence="3">
    <location>
        <begin position="432"/>
        <end position="447"/>
    </location>
</feature>
<feature type="helix" evidence="3">
    <location>
        <begin position="450"/>
        <end position="456"/>
    </location>
</feature>
<sequence>MPMVLLECDKDIPERQKHIYLKAPNEDTREFLPIANAATIPGTLSERGCAFCGAKLVIGGVLKDTIQMIHGPLGCAYDTWHTKRYPTDNGHFNMKYVWSTDMKESHVVFGGEKRLEKSMHEAFDEMPDIKRMIVYTTCPTALIGDDIKAVAKKVMKDRPDVDVFTVECPGFSGVSQSKGHHVLNIGWINEKVETMEKEITSEYTMNFIGDFNIQGDTQLLQTYWDRLGIQVVAHFTGNGTYDDLRCMHQAQLNVVNCARSSGYIANELKKRYGIPRLDIDSWGFNYMAEGIRKICAFFGIEEKGEELIAEEYAKWKPKLDWYKERLQGKKMAIWTGGPRLWHWTKSVEDDLGVQVVAMSSKFGHEEDFEKVIARGKEGTYYIDDGNELEFFEIIDLVKPDVIFTGPRVGELVKKLHIPYVNGHGYHNGPYMGFEGFVNLARDMYNAVHNPLRHLAAVDIRDKSQTTPVIVRGAA</sequence>
<protein>
    <recommendedName>
        <fullName>Nitrogenase vanadium-iron protein alpha chain</fullName>
        <ecNumber>1.18.6.1</ecNumber>
    </recommendedName>
    <alternativeName>
        <fullName>Dinitrogenase 2 subunit alpha</fullName>
    </alternativeName>
    <alternativeName>
        <fullName>Nitrogenase component I</fullName>
    </alternativeName>
</protein>
<accession>P16855</accession>
<dbReference type="EC" id="1.18.6.1"/>
<dbReference type="EMBL" id="M32371">
    <property type="protein sequence ID" value="AAA22172.1"/>
    <property type="molecule type" value="Genomic_DNA"/>
</dbReference>
<dbReference type="PIR" id="C35405">
    <property type="entry name" value="C35405"/>
</dbReference>
<dbReference type="RefSeq" id="WP_012698950.1">
    <property type="nucleotide sequence ID" value="NZ_FPKM01000002.1"/>
</dbReference>
<dbReference type="PDB" id="5N6Y">
    <property type="method" value="X-ray"/>
    <property type="resolution" value="1.35 A"/>
    <property type="chains" value="A/D=1-474"/>
</dbReference>
<dbReference type="PDB" id="7ADR">
    <property type="method" value="X-ray"/>
    <property type="resolution" value="1.00 A"/>
    <property type="chains" value="A/D=1-474"/>
</dbReference>
<dbReference type="PDB" id="7ADY">
    <property type="method" value="X-ray"/>
    <property type="resolution" value="1.05 A"/>
    <property type="chains" value="A/D=1-474"/>
</dbReference>
<dbReference type="PDB" id="7AIZ">
    <property type="method" value="X-ray"/>
    <property type="resolution" value="1.05 A"/>
    <property type="chains" value="A/D=1-474"/>
</dbReference>
<dbReference type="PDBsum" id="5N6Y"/>
<dbReference type="PDBsum" id="7ADR"/>
<dbReference type="PDBsum" id="7ADY"/>
<dbReference type="PDBsum" id="7AIZ"/>
<dbReference type="SMR" id="P16855"/>
<dbReference type="DIP" id="DIP-48893N"/>
<dbReference type="IntAct" id="P16855">
    <property type="interactions" value="2"/>
</dbReference>
<dbReference type="GeneID" id="88183721"/>
<dbReference type="OMA" id="LWHWTKS"/>
<dbReference type="BRENDA" id="1.18.6.2">
    <property type="organism ID" value="49"/>
</dbReference>
<dbReference type="GO" id="GO:0005524">
    <property type="term" value="F:ATP binding"/>
    <property type="evidence" value="ECO:0007669"/>
    <property type="project" value="UniProtKB-KW"/>
</dbReference>
<dbReference type="GO" id="GO:0051536">
    <property type="term" value="F:iron-sulfur cluster binding"/>
    <property type="evidence" value="ECO:0007669"/>
    <property type="project" value="UniProtKB-KW"/>
</dbReference>
<dbReference type="GO" id="GO:0016163">
    <property type="term" value="F:nitrogenase activity"/>
    <property type="evidence" value="ECO:0007669"/>
    <property type="project" value="UniProtKB-EC"/>
</dbReference>
<dbReference type="GO" id="GO:0051212">
    <property type="term" value="F:vanadium ion binding"/>
    <property type="evidence" value="ECO:0007669"/>
    <property type="project" value="InterPro"/>
</dbReference>
<dbReference type="GO" id="GO:0009399">
    <property type="term" value="P:nitrogen fixation"/>
    <property type="evidence" value="ECO:0007669"/>
    <property type="project" value="UniProtKB-KW"/>
</dbReference>
<dbReference type="CDD" id="cd01977">
    <property type="entry name" value="Nitrogenase_VFe_alpha"/>
    <property type="match status" value="1"/>
</dbReference>
<dbReference type="Gene3D" id="3.40.50.1980">
    <property type="entry name" value="Nitrogenase molybdenum iron protein domain"/>
    <property type="match status" value="3"/>
</dbReference>
<dbReference type="InterPro" id="IPR000510">
    <property type="entry name" value="Nase/OxRdtase_comp1"/>
</dbReference>
<dbReference type="InterPro" id="IPR005974">
    <property type="entry name" value="Nase_asu"/>
</dbReference>
<dbReference type="InterPro" id="IPR010143">
    <property type="entry name" value="Nase_comp1_asu"/>
</dbReference>
<dbReference type="InterPro" id="IPR000318">
    <property type="entry name" value="Nase_comp1_CS"/>
</dbReference>
<dbReference type="InterPro" id="IPR010142">
    <property type="entry name" value="Nase_V-Fe_asu"/>
</dbReference>
<dbReference type="NCBIfam" id="TIGR01284">
    <property type="entry name" value="alt_nitrog_alph"/>
    <property type="match status" value="1"/>
</dbReference>
<dbReference type="NCBIfam" id="TIGR01862">
    <property type="entry name" value="N2-ase-Ialpha"/>
    <property type="match status" value="1"/>
</dbReference>
<dbReference type="NCBIfam" id="TIGR01860">
    <property type="entry name" value="VNFD"/>
    <property type="match status" value="1"/>
</dbReference>
<dbReference type="PANTHER" id="PTHR43457">
    <property type="entry name" value="NITROGENASE MOLYBDENUM-IRON PROTEIN ALPHA CHAIN"/>
    <property type="match status" value="1"/>
</dbReference>
<dbReference type="PANTHER" id="PTHR43457:SF1">
    <property type="entry name" value="NITROGENASE MOLYBDENUM-IRON PROTEIN ALPHA CHAIN"/>
    <property type="match status" value="1"/>
</dbReference>
<dbReference type="Pfam" id="PF00148">
    <property type="entry name" value="Oxidored_nitro"/>
    <property type="match status" value="1"/>
</dbReference>
<dbReference type="SUPFAM" id="SSF53807">
    <property type="entry name" value="Helical backbone' metal receptor"/>
    <property type="match status" value="1"/>
</dbReference>
<dbReference type="PROSITE" id="PS00699">
    <property type="entry name" value="NITROGENASE_1_1"/>
    <property type="match status" value="1"/>
</dbReference>
<dbReference type="PROSITE" id="PS00090">
    <property type="entry name" value="NITROGENASE_1_2"/>
    <property type="match status" value="1"/>
</dbReference>
<reference key="1">
    <citation type="journal article" date="1990" name="J. Bacteriol.">
        <title>Nucleotide sequences and mutational analysis of the structural genes for nitrogenase 2 of Azotobacter vinelandii.</title>
        <authorList>
            <person name="Joerger R.D."/>
            <person name="Loveless T.M."/>
            <person name="Pau R.N."/>
            <person name="Mitchenall L.A."/>
            <person name="Simon B.H."/>
            <person name="Bishop P.E."/>
        </authorList>
    </citation>
    <scope>NUCLEOTIDE SEQUENCE [GENOMIC DNA]</scope>
</reference>
<name>VNFD_AZOVI</name>
<evidence type="ECO:0000250" key="1"/>
<evidence type="ECO:0000305" key="2"/>
<evidence type="ECO:0007829" key="3">
    <source>
        <dbReference type="PDB" id="7ADR"/>
    </source>
</evidence>
<evidence type="ECO:0007829" key="4">
    <source>
        <dbReference type="PDB" id="7ADY"/>
    </source>
</evidence>
<keyword id="KW-0002">3D-structure</keyword>
<keyword id="KW-0067">ATP-binding</keyword>
<keyword id="KW-0408">Iron</keyword>
<keyword id="KW-0411">Iron-sulfur</keyword>
<keyword id="KW-0479">Metal-binding</keyword>
<keyword id="KW-0535">Nitrogen fixation</keyword>
<keyword id="KW-0547">Nucleotide-binding</keyword>
<keyword id="KW-0560">Oxidoreductase</keyword>
<keyword id="KW-0837">Vanadium</keyword>
<comment type="function">
    <text>This vanadium-iron protein is part of the nitrogenase complex that catalyzes the key enzymatic reactions in nitrogen fixation.</text>
</comment>
<comment type="catalytic activity">
    <reaction>
        <text>N2 + 8 reduced [2Fe-2S]-[ferredoxin] + 16 ATP + 16 H2O = H2 + 8 oxidized [2Fe-2S]-[ferredoxin] + 2 NH4(+) + 16 ADP + 16 phosphate + 6 H(+)</text>
        <dbReference type="Rhea" id="RHEA:21448"/>
        <dbReference type="Rhea" id="RHEA-COMP:10000"/>
        <dbReference type="Rhea" id="RHEA-COMP:10001"/>
        <dbReference type="ChEBI" id="CHEBI:15377"/>
        <dbReference type="ChEBI" id="CHEBI:15378"/>
        <dbReference type="ChEBI" id="CHEBI:17997"/>
        <dbReference type="ChEBI" id="CHEBI:18276"/>
        <dbReference type="ChEBI" id="CHEBI:28938"/>
        <dbReference type="ChEBI" id="CHEBI:30616"/>
        <dbReference type="ChEBI" id="CHEBI:33737"/>
        <dbReference type="ChEBI" id="CHEBI:33738"/>
        <dbReference type="ChEBI" id="CHEBI:43474"/>
        <dbReference type="ChEBI" id="CHEBI:456216"/>
        <dbReference type="EC" id="1.18.6.1"/>
    </reaction>
</comment>
<comment type="cofactor">
    <cofactor evidence="1">
        <name>[8Fe-7S] cluster</name>
        <dbReference type="ChEBI" id="CHEBI:21143"/>
    </cofactor>
    <text evidence="1">Binds 1 [8Fe-7S] cluster per heterodimer.</text>
</comment>
<comment type="cofactor">
    <cofactor evidence="1">
        <name>[7Fe-V-9S-C-homocitryl] cluster</name>
        <dbReference type="ChEBI" id="CHEBI:60357"/>
    </cofactor>
    <text evidence="1">Binds 1 [7Fe-V-9S-C-homocitryl] cluster per subunit.</text>
</comment>
<comment type="subunit">
    <text>Hexamer of two alpha, two beta, and two delta chains.</text>
</comment>
<comment type="miscellaneous">
    <text>The structure of the 7Fe-V-9S-C-homocitryl cluster is assumed to be analogous to the 7Fe-Mo-9S-C-homocitryl cluster.</text>
</comment>
<comment type="similarity">
    <text evidence="2">Belongs to the NifD/NifK/NifE/NifN family.</text>
</comment>
<organism>
    <name type="scientific">Azotobacter vinelandii</name>
    <dbReference type="NCBI Taxonomy" id="354"/>
    <lineage>
        <taxon>Bacteria</taxon>
        <taxon>Pseudomonadati</taxon>
        <taxon>Pseudomonadota</taxon>
        <taxon>Gammaproteobacteria</taxon>
        <taxon>Pseudomonadales</taxon>
        <taxon>Pseudomonadaceae</taxon>
        <taxon>Azotobacter</taxon>
    </lineage>
</organism>
<proteinExistence type="evidence at protein level"/>
<gene>
    <name type="primary">vnfD</name>
</gene>